<feature type="chain" id="PRO_0000332224" description="Putative coiled-coil domain-containing protein 196">
    <location>
        <begin position="1"/>
        <end position="198"/>
    </location>
</feature>
<feature type="region of interest" description="Disordered" evidence="3">
    <location>
        <begin position="135"/>
        <end position="198"/>
    </location>
</feature>
<feature type="coiled-coil region" evidence="2">
    <location>
        <begin position="24"/>
        <end position="117"/>
    </location>
</feature>
<feature type="compositionally biased region" description="Basic and acidic residues" evidence="3">
    <location>
        <begin position="135"/>
        <end position="144"/>
    </location>
</feature>
<feature type="compositionally biased region" description="Basic and acidic residues" evidence="3">
    <location>
        <begin position="154"/>
        <end position="167"/>
    </location>
</feature>
<feature type="compositionally biased region" description="Polar residues" evidence="3">
    <location>
        <begin position="187"/>
        <end position="198"/>
    </location>
</feature>
<accession>Q2YDE5</accession>
<dbReference type="EMBL" id="BC110259">
    <property type="protein sequence ID" value="AAI10260.1"/>
    <property type="molecule type" value="mRNA"/>
</dbReference>
<dbReference type="SMR" id="Q2YDE5"/>
<dbReference type="STRING" id="9913.ENSBTAP00000040920"/>
<dbReference type="PaxDb" id="9913-ENSBTAP00000040920"/>
<dbReference type="eggNOG" id="ENOG502STP6">
    <property type="taxonomic scope" value="Eukaryota"/>
</dbReference>
<dbReference type="HOGENOM" id="CLU_092653_1_0_1"/>
<dbReference type="InParanoid" id="Q2YDE5"/>
<dbReference type="OrthoDB" id="9451755at2759"/>
<dbReference type="Proteomes" id="UP000009136">
    <property type="component" value="Unplaced"/>
</dbReference>
<dbReference type="PANTHER" id="PTHR37863">
    <property type="entry name" value="COILED-COIL DOMAIN-CONTAINING PROTEIN 196-RELATED"/>
    <property type="match status" value="1"/>
</dbReference>
<dbReference type="PANTHER" id="PTHR37863:SF1">
    <property type="entry name" value="COILED-COIL DOMAIN-CONTAINING PROTEIN 196-RELATED"/>
    <property type="match status" value="1"/>
</dbReference>
<evidence type="ECO:0000250" key="1">
    <source>
        <dbReference type="UniProtKB" id="A0A1B0GTZ2"/>
    </source>
</evidence>
<evidence type="ECO:0000255" key="2"/>
<evidence type="ECO:0000256" key="3">
    <source>
        <dbReference type="SAM" id="MobiDB-lite"/>
    </source>
</evidence>
<evidence type="ECO:0000305" key="4"/>
<gene>
    <name evidence="1" type="primary">CCDC196</name>
</gene>
<reference key="1">
    <citation type="submission" date="2005-11" db="EMBL/GenBank/DDBJ databases">
        <authorList>
            <consortium name="NIH - Mammalian Gene Collection (MGC) project"/>
        </authorList>
    </citation>
    <scope>NUCLEOTIDE SEQUENCE [LARGE SCALE MRNA]</scope>
    <source>
        <strain>Crossbred X Angus</strain>
        <tissue>Liver</tissue>
    </source>
</reference>
<sequence>MTSASNSPESYLSSKTRSSKLDDNYLKELNEDLKLRKQELLEILKPLEDKNNLLFQKLMSNLEEKQRSLQIMRQIMAGKGNDDSSVIELIKEAEEMKQNLERKNKMLRKEMEMLWNKTFNTEEFSDEEKVLQIKNKTDLQDGKAPKTPSSSRKTKNELETLCAEKGKEIRKRLFLPPGKETEENGMGQVSGTSQHHSE</sequence>
<name>CC196_BOVIN</name>
<comment type="caution">
    <text evidence="4">Product of a dubious gene prediction.</text>
</comment>
<keyword id="KW-0175">Coiled coil</keyword>
<keyword id="KW-1185">Reference proteome</keyword>
<organism>
    <name type="scientific">Bos taurus</name>
    <name type="common">Bovine</name>
    <dbReference type="NCBI Taxonomy" id="9913"/>
    <lineage>
        <taxon>Eukaryota</taxon>
        <taxon>Metazoa</taxon>
        <taxon>Chordata</taxon>
        <taxon>Craniata</taxon>
        <taxon>Vertebrata</taxon>
        <taxon>Euteleostomi</taxon>
        <taxon>Mammalia</taxon>
        <taxon>Eutheria</taxon>
        <taxon>Laurasiatheria</taxon>
        <taxon>Artiodactyla</taxon>
        <taxon>Ruminantia</taxon>
        <taxon>Pecora</taxon>
        <taxon>Bovidae</taxon>
        <taxon>Bovinae</taxon>
        <taxon>Bos</taxon>
    </lineage>
</organism>
<protein>
    <recommendedName>
        <fullName evidence="4">Putative coiled-coil domain-containing protein 196</fullName>
    </recommendedName>
</protein>
<proteinExistence type="uncertain"/>